<keyword id="KW-0963">Cytoplasm</keyword>
<keyword id="KW-0238">DNA-binding</keyword>
<keyword id="KW-1185">Reference proteome</keyword>
<keyword id="KW-0804">Transcription</keyword>
<keyword id="KW-0805">Transcription regulation</keyword>
<organism>
    <name type="scientific">Brucella canis (strain ATCC 23365 / NCTC 10854 / RM-666)</name>
    <dbReference type="NCBI Taxonomy" id="483179"/>
    <lineage>
        <taxon>Bacteria</taxon>
        <taxon>Pseudomonadati</taxon>
        <taxon>Pseudomonadota</taxon>
        <taxon>Alphaproteobacteria</taxon>
        <taxon>Hyphomicrobiales</taxon>
        <taxon>Brucellaceae</taxon>
        <taxon>Brucella/Ochrobactrum group</taxon>
        <taxon>Brucella</taxon>
    </lineage>
</organism>
<accession>A9M7L4</accession>
<evidence type="ECO:0000255" key="1">
    <source>
        <dbReference type="HAMAP-Rule" id="MF_00693"/>
    </source>
</evidence>
<dbReference type="EMBL" id="CP000872">
    <property type="protein sequence ID" value="ABX62761.1"/>
    <property type="molecule type" value="Genomic_DNA"/>
</dbReference>
<dbReference type="RefSeq" id="WP_002964805.1">
    <property type="nucleotide sequence ID" value="NC_010103.1"/>
</dbReference>
<dbReference type="SMR" id="A9M7L4"/>
<dbReference type="KEGG" id="bcs:BCAN_A1755"/>
<dbReference type="HOGENOM" id="CLU_062974_2_2_5"/>
<dbReference type="Proteomes" id="UP000001385">
    <property type="component" value="Chromosome I"/>
</dbReference>
<dbReference type="GO" id="GO:0005829">
    <property type="term" value="C:cytosol"/>
    <property type="evidence" value="ECO:0007669"/>
    <property type="project" value="TreeGrafter"/>
</dbReference>
<dbReference type="GO" id="GO:0003677">
    <property type="term" value="F:DNA binding"/>
    <property type="evidence" value="ECO:0007669"/>
    <property type="project" value="UniProtKB-UniRule"/>
</dbReference>
<dbReference type="GO" id="GO:0006355">
    <property type="term" value="P:regulation of DNA-templated transcription"/>
    <property type="evidence" value="ECO:0007669"/>
    <property type="project" value="UniProtKB-UniRule"/>
</dbReference>
<dbReference type="FunFam" id="1.10.10.200:FF:000002">
    <property type="entry name" value="Probable transcriptional regulatory protein CLM62_37755"/>
    <property type="match status" value="1"/>
</dbReference>
<dbReference type="Gene3D" id="1.10.10.200">
    <property type="match status" value="1"/>
</dbReference>
<dbReference type="Gene3D" id="3.30.70.980">
    <property type="match status" value="2"/>
</dbReference>
<dbReference type="HAMAP" id="MF_00693">
    <property type="entry name" value="Transcrip_reg_TACO1"/>
    <property type="match status" value="1"/>
</dbReference>
<dbReference type="InterPro" id="IPR017856">
    <property type="entry name" value="Integrase-like_N"/>
</dbReference>
<dbReference type="InterPro" id="IPR048300">
    <property type="entry name" value="TACO1_YebC-like_2nd/3rd_dom"/>
</dbReference>
<dbReference type="InterPro" id="IPR049083">
    <property type="entry name" value="TACO1_YebC_N"/>
</dbReference>
<dbReference type="InterPro" id="IPR002876">
    <property type="entry name" value="Transcrip_reg_TACO1-like"/>
</dbReference>
<dbReference type="InterPro" id="IPR026564">
    <property type="entry name" value="Transcrip_reg_TACO1-like_dom3"/>
</dbReference>
<dbReference type="InterPro" id="IPR029072">
    <property type="entry name" value="YebC-like"/>
</dbReference>
<dbReference type="NCBIfam" id="NF001030">
    <property type="entry name" value="PRK00110.1"/>
    <property type="match status" value="1"/>
</dbReference>
<dbReference type="NCBIfam" id="NF009044">
    <property type="entry name" value="PRK12378.1"/>
    <property type="match status" value="1"/>
</dbReference>
<dbReference type="NCBIfam" id="TIGR01033">
    <property type="entry name" value="YebC/PmpR family DNA-binding transcriptional regulator"/>
    <property type="match status" value="1"/>
</dbReference>
<dbReference type="PANTHER" id="PTHR12532:SF6">
    <property type="entry name" value="TRANSCRIPTIONAL REGULATORY PROTEIN YEBC-RELATED"/>
    <property type="match status" value="1"/>
</dbReference>
<dbReference type="PANTHER" id="PTHR12532">
    <property type="entry name" value="TRANSLATIONAL ACTIVATOR OF CYTOCHROME C OXIDASE 1"/>
    <property type="match status" value="1"/>
</dbReference>
<dbReference type="Pfam" id="PF20772">
    <property type="entry name" value="TACO1_YebC_N"/>
    <property type="match status" value="1"/>
</dbReference>
<dbReference type="Pfam" id="PF01709">
    <property type="entry name" value="Transcrip_reg"/>
    <property type="match status" value="1"/>
</dbReference>
<dbReference type="SUPFAM" id="SSF75625">
    <property type="entry name" value="YebC-like"/>
    <property type="match status" value="1"/>
</dbReference>
<name>Y1755_BRUC2</name>
<comment type="subcellular location">
    <subcellularLocation>
        <location evidence="1">Cytoplasm</location>
    </subcellularLocation>
</comment>
<comment type="similarity">
    <text evidence="1">Belongs to the TACO1 family.</text>
</comment>
<reference key="1">
    <citation type="submission" date="2007-10" db="EMBL/GenBank/DDBJ databases">
        <title>Brucella canis ATCC 23365 whole genome shotgun sequencing project.</title>
        <authorList>
            <person name="Setubal J.C."/>
            <person name="Bowns C."/>
            <person name="Boyle S."/>
            <person name="Crasta O.R."/>
            <person name="Czar M.J."/>
            <person name="Dharmanolla C."/>
            <person name="Gillespie J.J."/>
            <person name="Kenyon R.W."/>
            <person name="Lu J."/>
            <person name="Mane S."/>
            <person name="Mohapatra S."/>
            <person name="Nagrani S."/>
            <person name="Purkayastha A."/>
            <person name="Rajasimha H.K."/>
            <person name="Shallom J.M."/>
            <person name="Shallom S."/>
            <person name="Shukla M."/>
            <person name="Snyder E.E."/>
            <person name="Sobral B.W."/>
            <person name="Wattam A.R."/>
            <person name="Will R."/>
            <person name="Williams K."/>
            <person name="Yoo H."/>
            <person name="Bruce D."/>
            <person name="Detter C."/>
            <person name="Munk C."/>
            <person name="Brettin T.S."/>
        </authorList>
    </citation>
    <scope>NUCLEOTIDE SEQUENCE [LARGE SCALE GENOMIC DNA]</scope>
    <source>
        <strain>ATCC 23365 / NCTC 10854 / RM-666</strain>
    </source>
</reference>
<feature type="chain" id="PRO_1000083144" description="Probable transcriptional regulatory protein BCAN_A1755">
    <location>
        <begin position="1"/>
        <end position="248"/>
    </location>
</feature>
<proteinExistence type="inferred from homology"/>
<sequence>MAGHSQFKNIMHRKGRQDAVRSKMFSKLAREITVAAKQGLPDPAMNPRLRLAIQNAKAQSMPKDNIERAIKKAAGNDGENYDEVRYEGRGPGGVSVIVEALTDNRNRTASNVRAAFTKSGGSLGETGSVSFMFDRVGEIVYKPEAGDADKVMEAAIEAGAEDVQSGEDGHVILCAFEDIGEVSKALEAALGEAESIKTIWKPQTNTELDEEKARSVLKLLSVLEDDDDVQNVYTNFEVSDEVMEKLSA</sequence>
<protein>
    <recommendedName>
        <fullName evidence="1">Probable transcriptional regulatory protein BCAN_A1755</fullName>
    </recommendedName>
</protein>
<gene>
    <name type="ordered locus">BCAN_A1755</name>
</gene>